<gene>
    <name evidence="1" type="primary">MT-ND2</name>
    <name type="synonym">MTND2</name>
    <name type="synonym">NADH2</name>
    <name type="synonym">ND2</name>
</gene>
<accession>Q85PS1</accession>
<evidence type="ECO:0000250" key="1">
    <source>
        <dbReference type="UniProtKB" id="P03891"/>
    </source>
</evidence>
<evidence type="ECO:0000250" key="2">
    <source>
        <dbReference type="UniProtKB" id="P03892"/>
    </source>
</evidence>
<evidence type="ECO:0000255" key="3"/>
<evidence type="ECO:0000305" key="4"/>
<reference key="1">
    <citation type="journal article" date="2003" name="Nature">
        <title>Single origin of Malagasy Carnivora from an African ancestor.</title>
        <authorList>
            <person name="Yoder A.D."/>
            <person name="Burns M.M."/>
            <person name="Zehr S."/>
            <person name="Delefosse T."/>
            <person name="Veron G."/>
            <person name="Goodman S.M."/>
            <person name="Flynn J.J."/>
        </authorList>
    </citation>
    <scope>NUCLEOTIDE SEQUENCE [GENOMIC DNA]</scope>
</reference>
<keyword id="KW-0249">Electron transport</keyword>
<keyword id="KW-0472">Membrane</keyword>
<keyword id="KW-0496">Mitochondrion</keyword>
<keyword id="KW-0999">Mitochondrion inner membrane</keyword>
<keyword id="KW-0520">NAD</keyword>
<keyword id="KW-0679">Respiratory chain</keyword>
<keyword id="KW-1278">Translocase</keyword>
<keyword id="KW-0812">Transmembrane</keyword>
<keyword id="KW-1133">Transmembrane helix</keyword>
<keyword id="KW-0813">Transport</keyword>
<keyword id="KW-0830">Ubiquinone</keyword>
<organism>
    <name type="scientific">Mungos mungo</name>
    <name type="common">Banded mongoose</name>
    <dbReference type="NCBI Taxonomy" id="210652"/>
    <lineage>
        <taxon>Eukaryota</taxon>
        <taxon>Metazoa</taxon>
        <taxon>Chordata</taxon>
        <taxon>Craniata</taxon>
        <taxon>Vertebrata</taxon>
        <taxon>Euteleostomi</taxon>
        <taxon>Mammalia</taxon>
        <taxon>Eutheria</taxon>
        <taxon>Laurasiatheria</taxon>
        <taxon>Carnivora</taxon>
        <taxon>Feliformia</taxon>
        <taxon>Herpestidae</taxon>
        <taxon>Mungos</taxon>
    </lineage>
</organism>
<feature type="chain" id="PRO_0000117608" description="NADH-ubiquinone oxidoreductase chain 2">
    <location>
        <begin position="1"/>
        <end position="347"/>
    </location>
</feature>
<feature type="transmembrane region" description="Helical" evidence="3">
    <location>
        <begin position="3"/>
        <end position="23"/>
    </location>
</feature>
<feature type="transmembrane region" description="Helical" evidence="3">
    <location>
        <begin position="25"/>
        <end position="45"/>
    </location>
</feature>
<feature type="transmembrane region" description="Helical" evidence="3">
    <location>
        <begin position="60"/>
        <end position="80"/>
    </location>
</feature>
<feature type="transmembrane region" description="Helical" evidence="3">
    <location>
        <begin position="96"/>
        <end position="116"/>
    </location>
</feature>
<feature type="transmembrane region" description="Helical" evidence="3">
    <location>
        <begin position="149"/>
        <end position="169"/>
    </location>
</feature>
<feature type="transmembrane region" description="Helical" evidence="3">
    <location>
        <begin position="178"/>
        <end position="198"/>
    </location>
</feature>
<feature type="transmembrane region" description="Helical" evidence="3">
    <location>
        <begin position="200"/>
        <end position="220"/>
    </location>
</feature>
<feature type="transmembrane region" description="Helical" evidence="3">
    <location>
        <begin position="237"/>
        <end position="257"/>
    </location>
</feature>
<feature type="transmembrane region" description="Helical" evidence="3">
    <location>
        <begin position="274"/>
        <end position="294"/>
    </location>
</feature>
<feature type="transmembrane region" description="Helical" evidence="3">
    <location>
        <begin position="323"/>
        <end position="343"/>
    </location>
</feature>
<geneLocation type="mitochondrion"/>
<protein>
    <recommendedName>
        <fullName evidence="1">NADH-ubiquinone oxidoreductase chain 2</fullName>
        <ecNumber evidence="1">7.1.1.2</ecNumber>
    </recommendedName>
    <alternativeName>
        <fullName>NADH dehydrogenase subunit 2</fullName>
    </alternativeName>
</protein>
<comment type="function">
    <text evidence="1">Core subunit of the mitochondrial membrane respiratory chain NADH dehydrogenase (Complex I) which catalyzes electron transfer from NADH through the respiratory chain, using ubiquinone as an electron acceptor. Essential for the catalytic activity and assembly of complex I.</text>
</comment>
<comment type="catalytic activity">
    <reaction evidence="1">
        <text>a ubiquinone + NADH + 5 H(+)(in) = a ubiquinol + NAD(+) + 4 H(+)(out)</text>
        <dbReference type="Rhea" id="RHEA:29091"/>
        <dbReference type="Rhea" id="RHEA-COMP:9565"/>
        <dbReference type="Rhea" id="RHEA-COMP:9566"/>
        <dbReference type="ChEBI" id="CHEBI:15378"/>
        <dbReference type="ChEBI" id="CHEBI:16389"/>
        <dbReference type="ChEBI" id="CHEBI:17976"/>
        <dbReference type="ChEBI" id="CHEBI:57540"/>
        <dbReference type="ChEBI" id="CHEBI:57945"/>
        <dbReference type="EC" id="7.1.1.2"/>
    </reaction>
</comment>
<comment type="subunit">
    <text evidence="1 2">Core subunit of respiratory chain NADH dehydrogenase (Complex I) which is composed of 45 different subunits. Interacts with TMEM242 (By similarity).</text>
</comment>
<comment type="subcellular location">
    <subcellularLocation>
        <location evidence="2">Mitochondrion inner membrane</location>
        <topology evidence="3">Multi-pass membrane protein</topology>
    </subcellularLocation>
</comment>
<comment type="similarity">
    <text evidence="4">Belongs to the complex I subunit 2 family.</text>
</comment>
<name>NU2M_MUNMN</name>
<sequence length="347" mass="38740">MKPPILLIILLTMISGTMIVLTSSHWLTIWIGLEMNMLAIIPILMKKSNPRAIEASTKYLLTQATASMILMMGITINLMFSGQWATSKTLCPTTSAMVTTALAMKLGLAPFHFWVPEVTQGTHLSSGLILLTWQKIAPLSVLYQTSPTIDPNLLLPMAITSILIGGWGGLNQTQLRKILAYSSIAHMGWMTAVTLYNPTMMLLNLTIYIIMTTTTFMLFMYNSTTTTLSLSQTWNKAPLITPLILMLMLSLGGLPPLSGFIPKWMIIQELTKNEMIIIPTIMAITALLNLYFYMRLTYSTTLTMFPSTNNMKMKWKFDNMKKMILLSPLTVVSTMLLPITPLLSILD</sequence>
<dbReference type="EC" id="7.1.1.2" evidence="1"/>
<dbReference type="EMBL" id="AY170035">
    <property type="protein sequence ID" value="AAN84569.1"/>
    <property type="molecule type" value="Genomic_DNA"/>
</dbReference>
<dbReference type="SMR" id="Q85PS1"/>
<dbReference type="GO" id="GO:0005743">
    <property type="term" value="C:mitochondrial inner membrane"/>
    <property type="evidence" value="ECO:0000250"/>
    <property type="project" value="UniProtKB"/>
</dbReference>
<dbReference type="GO" id="GO:0008137">
    <property type="term" value="F:NADH dehydrogenase (ubiquinone) activity"/>
    <property type="evidence" value="ECO:0000250"/>
    <property type="project" value="UniProtKB"/>
</dbReference>
<dbReference type="GO" id="GO:0006120">
    <property type="term" value="P:mitochondrial electron transport, NADH to ubiquinone"/>
    <property type="evidence" value="ECO:0000250"/>
    <property type="project" value="UniProtKB"/>
</dbReference>
<dbReference type="GO" id="GO:0032981">
    <property type="term" value="P:mitochondrial respiratory chain complex I assembly"/>
    <property type="evidence" value="ECO:0000250"/>
    <property type="project" value="UniProtKB"/>
</dbReference>
<dbReference type="InterPro" id="IPR050175">
    <property type="entry name" value="Complex_I_Subunit_2"/>
</dbReference>
<dbReference type="InterPro" id="IPR010933">
    <property type="entry name" value="NADH_DH_su2_C"/>
</dbReference>
<dbReference type="InterPro" id="IPR003917">
    <property type="entry name" value="NADH_UbQ_OxRdtase_chain2"/>
</dbReference>
<dbReference type="InterPro" id="IPR001750">
    <property type="entry name" value="ND/Mrp_TM"/>
</dbReference>
<dbReference type="PANTHER" id="PTHR46552">
    <property type="entry name" value="NADH-UBIQUINONE OXIDOREDUCTASE CHAIN 2"/>
    <property type="match status" value="1"/>
</dbReference>
<dbReference type="PANTHER" id="PTHR46552:SF1">
    <property type="entry name" value="NADH-UBIQUINONE OXIDOREDUCTASE CHAIN 2"/>
    <property type="match status" value="1"/>
</dbReference>
<dbReference type="Pfam" id="PF06444">
    <property type="entry name" value="NADH_dehy_S2_C"/>
    <property type="match status" value="1"/>
</dbReference>
<dbReference type="Pfam" id="PF00361">
    <property type="entry name" value="Proton_antipo_M"/>
    <property type="match status" value="1"/>
</dbReference>
<dbReference type="PRINTS" id="PR01436">
    <property type="entry name" value="NADHDHGNASE2"/>
</dbReference>
<proteinExistence type="inferred from homology"/>